<protein>
    <recommendedName>
        <fullName evidence="1">tRNA (guanine-N(1)-)-methyltransferase</fullName>
        <ecNumber evidence="1">2.1.1.228</ecNumber>
    </recommendedName>
    <alternativeName>
        <fullName evidence="1">M1G-methyltransferase</fullName>
    </alternativeName>
    <alternativeName>
        <fullName evidence="1">tRNA [GM37] methyltransferase</fullName>
    </alternativeName>
</protein>
<name>TRMD_NEIM0</name>
<sequence length="249" mass="27873">MLIQAVTIFPEMFDSITRYGVTGRANRQGIWQFEAVNPRKFADNRLGYIDDRPFGGGPGMIMMAPPLHAAIEHAKAQSSQTAKVIYLSPQGKPLTHQKAAELAELPHLILLCGRYEGIDERLLQTSVDEEISIGDFVVSGGELPAMMLMDAVLRLVPGVLGDMQSAEQDSFSSGILDCPHYTKPLEFQGMAVPEVLRSGNHGLIAEWRLEQSLRRTLERRPDLLEKRVLIPKESRLLETIRQEQREIQS</sequence>
<gene>
    <name evidence="1" type="primary">trmD</name>
    <name type="ordered locus">NMCC_0536</name>
</gene>
<accession>A9M2D1</accession>
<reference key="1">
    <citation type="journal article" date="2008" name="Genomics">
        <title>Characterization of ST-4821 complex, a unique Neisseria meningitidis clone.</title>
        <authorList>
            <person name="Peng J."/>
            <person name="Yang L."/>
            <person name="Yang F."/>
            <person name="Yang J."/>
            <person name="Yan Y."/>
            <person name="Nie H."/>
            <person name="Zhang X."/>
            <person name="Xiong Z."/>
            <person name="Jiang Y."/>
            <person name="Cheng F."/>
            <person name="Xu X."/>
            <person name="Chen S."/>
            <person name="Sun L."/>
            <person name="Li W."/>
            <person name="Shen Y."/>
            <person name="Shao Z."/>
            <person name="Liang X."/>
            <person name="Xu J."/>
            <person name="Jin Q."/>
        </authorList>
    </citation>
    <scope>NUCLEOTIDE SEQUENCE [LARGE SCALE GENOMIC DNA]</scope>
    <source>
        <strain>053442</strain>
    </source>
</reference>
<proteinExistence type="inferred from homology"/>
<dbReference type="EC" id="2.1.1.228" evidence="1"/>
<dbReference type="EMBL" id="CP000381">
    <property type="protein sequence ID" value="ABX72735.1"/>
    <property type="molecule type" value="Genomic_DNA"/>
</dbReference>
<dbReference type="RefSeq" id="WP_002233638.1">
    <property type="nucleotide sequence ID" value="NC_010120.1"/>
</dbReference>
<dbReference type="SMR" id="A9M2D1"/>
<dbReference type="KEGG" id="nmn:NMCC_0536"/>
<dbReference type="HOGENOM" id="CLU_047363_0_1_4"/>
<dbReference type="Proteomes" id="UP000001177">
    <property type="component" value="Chromosome"/>
</dbReference>
<dbReference type="GO" id="GO:0005829">
    <property type="term" value="C:cytosol"/>
    <property type="evidence" value="ECO:0007669"/>
    <property type="project" value="TreeGrafter"/>
</dbReference>
<dbReference type="GO" id="GO:0052906">
    <property type="term" value="F:tRNA (guanine(37)-N1)-methyltransferase activity"/>
    <property type="evidence" value="ECO:0007669"/>
    <property type="project" value="UniProtKB-UniRule"/>
</dbReference>
<dbReference type="GO" id="GO:0002939">
    <property type="term" value="P:tRNA N1-guanine methylation"/>
    <property type="evidence" value="ECO:0007669"/>
    <property type="project" value="TreeGrafter"/>
</dbReference>
<dbReference type="CDD" id="cd18080">
    <property type="entry name" value="TrmD-like"/>
    <property type="match status" value="1"/>
</dbReference>
<dbReference type="FunFam" id="1.10.1270.20:FF:000001">
    <property type="entry name" value="tRNA (guanine-N(1)-)-methyltransferase"/>
    <property type="match status" value="1"/>
</dbReference>
<dbReference type="FunFam" id="3.40.1280.10:FF:000001">
    <property type="entry name" value="tRNA (guanine-N(1)-)-methyltransferase"/>
    <property type="match status" value="1"/>
</dbReference>
<dbReference type="Gene3D" id="3.40.1280.10">
    <property type="match status" value="1"/>
</dbReference>
<dbReference type="Gene3D" id="1.10.1270.20">
    <property type="entry name" value="tRNA(m1g37)methyltransferase, domain 2"/>
    <property type="match status" value="1"/>
</dbReference>
<dbReference type="HAMAP" id="MF_00605">
    <property type="entry name" value="TrmD"/>
    <property type="match status" value="1"/>
</dbReference>
<dbReference type="InterPro" id="IPR029028">
    <property type="entry name" value="Alpha/beta_knot_MTases"/>
</dbReference>
<dbReference type="InterPro" id="IPR023148">
    <property type="entry name" value="tRNA_m1G_MeTrfase_C_sf"/>
</dbReference>
<dbReference type="InterPro" id="IPR002649">
    <property type="entry name" value="tRNA_m1G_MeTrfase_TrmD"/>
</dbReference>
<dbReference type="InterPro" id="IPR029026">
    <property type="entry name" value="tRNA_m1G_MTases_N"/>
</dbReference>
<dbReference type="InterPro" id="IPR016009">
    <property type="entry name" value="tRNA_MeTrfase_TRMD/TRM10"/>
</dbReference>
<dbReference type="NCBIfam" id="NF000648">
    <property type="entry name" value="PRK00026.1"/>
    <property type="match status" value="1"/>
</dbReference>
<dbReference type="NCBIfam" id="TIGR00088">
    <property type="entry name" value="trmD"/>
    <property type="match status" value="1"/>
</dbReference>
<dbReference type="PANTHER" id="PTHR46417">
    <property type="entry name" value="TRNA (GUANINE-N(1)-)-METHYLTRANSFERASE"/>
    <property type="match status" value="1"/>
</dbReference>
<dbReference type="PANTHER" id="PTHR46417:SF1">
    <property type="entry name" value="TRNA (GUANINE-N(1)-)-METHYLTRANSFERASE"/>
    <property type="match status" value="1"/>
</dbReference>
<dbReference type="Pfam" id="PF01746">
    <property type="entry name" value="tRNA_m1G_MT"/>
    <property type="match status" value="1"/>
</dbReference>
<dbReference type="PIRSF" id="PIRSF000386">
    <property type="entry name" value="tRNA_mtase"/>
    <property type="match status" value="1"/>
</dbReference>
<dbReference type="SUPFAM" id="SSF75217">
    <property type="entry name" value="alpha/beta knot"/>
    <property type="match status" value="1"/>
</dbReference>
<evidence type="ECO:0000255" key="1">
    <source>
        <dbReference type="HAMAP-Rule" id="MF_00605"/>
    </source>
</evidence>
<organism>
    <name type="scientific">Neisseria meningitidis serogroup C (strain 053442)</name>
    <dbReference type="NCBI Taxonomy" id="374833"/>
    <lineage>
        <taxon>Bacteria</taxon>
        <taxon>Pseudomonadati</taxon>
        <taxon>Pseudomonadota</taxon>
        <taxon>Betaproteobacteria</taxon>
        <taxon>Neisseriales</taxon>
        <taxon>Neisseriaceae</taxon>
        <taxon>Neisseria</taxon>
    </lineage>
</organism>
<comment type="function">
    <text evidence="1">Specifically methylates guanosine-37 in various tRNAs.</text>
</comment>
<comment type="catalytic activity">
    <reaction evidence="1">
        <text>guanosine(37) in tRNA + S-adenosyl-L-methionine = N(1)-methylguanosine(37) in tRNA + S-adenosyl-L-homocysteine + H(+)</text>
        <dbReference type="Rhea" id="RHEA:36899"/>
        <dbReference type="Rhea" id="RHEA-COMP:10145"/>
        <dbReference type="Rhea" id="RHEA-COMP:10147"/>
        <dbReference type="ChEBI" id="CHEBI:15378"/>
        <dbReference type="ChEBI" id="CHEBI:57856"/>
        <dbReference type="ChEBI" id="CHEBI:59789"/>
        <dbReference type="ChEBI" id="CHEBI:73542"/>
        <dbReference type="ChEBI" id="CHEBI:74269"/>
        <dbReference type="EC" id="2.1.1.228"/>
    </reaction>
</comment>
<comment type="subunit">
    <text evidence="1">Homodimer.</text>
</comment>
<comment type="subcellular location">
    <subcellularLocation>
        <location evidence="1">Cytoplasm</location>
    </subcellularLocation>
</comment>
<comment type="similarity">
    <text evidence="1">Belongs to the RNA methyltransferase TrmD family.</text>
</comment>
<keyword id="KW-0963">Cytoplasm</keyword>
<keyword id="KW-0489">Methyltransferase</keyword>
<keyword id="KW-0949">S-adenosyl-L-methionine</keyword>
<keyword id="KW-0808">Transferase</keyword>
<keyword id="KW-0819">tRNA processing</keyword>
<feature type="chain" id="PRO_1000082526" description="tRNA (guanine-N(1)-)-methyltransferase">
    <location>
        <begin position="1"/>
        <end position="249"/>
    </location>
</feature>
<feature type="binding site" evidence="1">
    <location>
        <position position="113"/>
    </location>
    <ligand>
        <name>S-adenosyl-L-methionine</name>
        <dbReference type="ChEBI" id="CHEBI:59789"/>
    </ligand>
</feature>
<feature type="binding site" evidence="1">
    <location>
        <begin position="133"/>
        <end position="138"/>
    </location>
    <ligand>
        <name>S-adenosyl-L-methionine</name>
        <dbReference type="ChEBI" id="CHEBI:59789"/>
    </ligand>
</feature>